<organism>
    <name type="scientific">Acinetobacter baumannii (strain AYE)</name>
    <dbReference type="NCBI Taxonomy" id="509173"/>
    <lineage>
        <taxon>Bacteria</taxon>
        <taxon>Pseudomonadati</taxon>
        <taxon>Pseudomonadota</taxon>
        <taxon>Gammaproteobacteria</taxon>
        <taxon>Moraxellales</taxon>
        <taxon>Moraxellaceae</taxon>
        <taxon>Acinetobacter</taxon>
        <taxon>Acinetobacter calcoaceticus/baumannii complex</taxon>
    </lineage>
</organism>
<accession>B0V9F5</accession>
<gene>
    <name evidence="1" type="primary">murG</name>
    <name type="ordered locus">ABAYE0148</name>
</gene>
<reference key="1">
    <citation type="journal article" date="2008" name="PLoS ONE">
        <title>Comparative analysis of Acinetobacters: three genomes for three lifestyles.</title>
        <authorList>
            <person name="Vallenet D."/>
            <person name="Nordmann P."/>
            <person name="Barbe V."/>
            <person name="Poirel L."/>
            <person name="Mangenot S."/>
            <person name="Bataille E."/>
            <person name="Dossat C."/>
            <person name="Gas S."/>
            <person name="Kreimeyer A."/>
            <person name="Lenoble P."/>
            <person name="Oztas S."/>
            <person name="Poulain J."/>
            <person name="Segurens B."/>
            <person name="Robert C."/>
            <person name="Abergel C."/>
            <person name="Claverie J.-M."/>
            <person name="Raoult D."/>
            <person name="Medigue C."/>
            <person name="Weissenbach J."/>
            <person name="Cruveiller S."/>
        </authorList>
    </citation>
    <scope>NUCLEOTIDE SEQUENCE [LARGE SCALE GENOMIC DNA]</scope>
    <source>
        <strain>AYE</strain>
    </source>
</reference>
<sequence>MTDSQQSKPKHVMMMAAGTGGHVFPALAVAKQLQQQGCQVSWLATPTGMENRLLKDQNIPIYQIDIQGVRGNGVIRKLAAPFKILKATFSAMRYMKQLKVDAVAGFGGYVAGPGGLAARLLGIPVLIHEQNAVAGFTNAQLSRVAKVVCEAFPNTFPASEKVVTTGNPVRREITDILSPKWRYDEREQAGKPLNILIVGGSLGAKALNERLPPALKQLEVPLNIFHQCGQQQVEATQALYADAPANLTVQVLPFIEDMAKAYSEADLIICRAGALTVTEVATAGVAAVFVPLPIAVDDHQTANAKFLADVGAAKICQQSTMTPEVLNQLFTTLMNRQLLTEMAVKARQHAQPNATQHVVDLIQKM</sequence>
<protein>
    <recommendedName>
        <fullName evidence="1">UDP-N-acetylglucosamine--N-acetylmuramyl-(pentapeptide) pyrophosphoryl-undecaprenol N-acetylglucosamine transferase</fullName>
        <ecNumber evidence="1">2.4.1.227</ecNumber>
    </recommendedName>
    <alternativeName>
        <fullName evidence="1">Undecaprenyl-PP-MurNAc-pentapeptide-UDPGlcNAc GlcNAc transferase</fullName>
    </alternativeName>
</protein>
<comment type="function">
    <text evidence="1">Cell wall formation. Catalyzes the transfer of a GlcNAc subunit on undecaprenyl-pyrophosphoryl-MurNAc-pentapeptide (lipid intermediate I) to form undecaprenyl-pyrophosphoryl-MurNAc-(pentapeptide)GlcNAc (lipid intermediate II).</text>
</comment>
<comment type="catalytic activity">
    <reaction evidence="1">
        <text>di-trans,octa-cis-undecaprenyl diphospho-N-acetyl-alpha-D-muramoyl-L-alanyl-D-glutamyl-meso-2,6-diaminopimeloyl-D-alanyl-D-alanine + UDP-N-acetyl-alpha-D-glucosamine = di-trans,octa-cis-undecaprenyl diphospho-[N-acetyl-alpha-D-glucosaminyl-(1-&gt;4)]-N-acetyl-alpha-D-muramoyl-L-alanyl-D-glutamyl-meso-2,6-diaminopimeloyl-D-alanyl-D-alanine + UDP + H(+)</text>
        <dbReference type="Rhea" id="RHEA:31227"/>
        <dbReference type="ChEBI" id="CHEBI:15378"/>
        <dbReference type="ChEBI" id="CHEBI:57705"/>
        <dbReference type="ChEBI" id="CHEBI:58223"/>
        <dbReference type="ChEBI" id="CHEBI:61387"/>
        <dbReference type="ChEBI" id="CHEBI:61388"/>
        <dbReference type="EC" id="2.4.1.227"/>
    </reaction>
</comment>
<comment type="pathway">
    <text evidence="1">Cell wall biogenesis; peptidoglycan biosynthesis.</text>
</comment>
<comment type="subcellular location">
    <subcellularLocation>
        <location evidence="1">Cell inner membrane</location>
        <topology evidence="1">Peripheral membrane protein</topology>
        <orientation evidence="1">Cytoplasmic side</orientation>
    </subcellularLocation>
</comment>
<comment type="similarity">
    <text evidence="1">Belongs to the glycosyltransferase 28 family. MurG subfamily.</text>
</comment>
<keyword id="KW-0131">Cell cycle</keyword>
<keyword id="KW-0132">Cell division</keyword>
<keyword id="KW-0997">Cell inner membrane</keyword>
<keyword id="KW-1003">Cell membrane</keyword>
<keyword id="KW-0133">Cell shape</keyword>
<keyword id="KW-0961">Cell wall biogenesis/degradation</keyword>
<keyword id="KW-0328">Glycosyltransferase</keyword>
<keyword id="KW-0472">Membrane</keyword>
<keyword id="KW-0573">Peptidoglycan synthesis</keyword>
<keyword id="KW-0808">Transferase</keyword>
<dbReference type="EC" id="2.4.1.227" evidence="1"/>
<dbReference type="EMBL" id="CU459141">
    <property type="protein sequence ID" value="CAM85134.1"/>
    <property type="molecule type" value="Genomic_DNA"/>
</dbReference>
<dbReference type="RefSeq" id="WP_000132435.1">
    <property type="nucleotide sequence ID" value="NZ_JBDGFB010000004.1"/>
</dbReference>
<dbReference type="SMR" id="B0V9F5"/>
<dbReference type="EnsemblBacteria" id="CAM85134">
    <property type="protein sequence ID" value="CAM85134"/>
    <property type="gene ID" value="ABAYE0148"/>
</dbReference>
<dbReference type="GeneID" id="92895579"/>
<dbReference type="KEGG" id="aby:ABAYE0148"/>
<dbReference type="HOGENOM" id="CLU_037404_2_0_6"/>
<dbReference type="BRENDA" id="2.4.1.227">
    <property type="organism ID" value="98"/>
</dbReference>
<dbReference type="UniPathway" id="UPA00219"/>
<dbReference type="GO" id="GO:0005886">
    <property type="term" value="C:plasma membrane"/>
    <property type="evidence" value="ECO:0007669"/>
    <property type="project" value="UniProtKB-SubCell"/>
</dbReference>
<dbReference type="GO" id="GO:0051991">
    <property type="term" value="F:UDP-N-acetyl-D-glucosamine:N-acetylmuramoyl-L-alanyl-D-glutamyl-meso-2,6-diaminopimelyl-D-alanyl-D-alanine-diphosphoundecaprenol 4-beta-N-acetylglucosaminlytransferase activity"/>
    <property type="evidence" value="ECO:0007669"/>
    <property type="project" value="RHEA"/>
</dbReference>
<dbReference type="GO" id="GO:0050511">
    <property type="term" value="F:undecaprenyldiphospho-muramoylpentapeptide beta-N-acetylglucosaminyltransferase activity"/>
    <property type="evidence" value="ECO:0007669"/>
    <property type="project" value="UniProtKB-UniRule"/>
</dbReference>
<dbReference type="GO" id="GO:0005975">
    <property type="term" value="P:carbohydrate metabolic process"/>
    <property type="evidence" value="ECO:0007669"/>
    <property type="project" value="InterPro"/>
</dbReference>
<dbReference type="GO" id="GO:0051301">
    <property type="term" value="P:cell division"/>
    <property type="evidence" value="ECO:0007669"/>
    <property type="project" value="UniProtKB-KW"/>
</dbReference>
<dbReference type="GO" id="GO:0071555">
    <property type="term" value="P:cell wall organization"/>
    <property type="evidence" value="ECO:0007669"/>
    <property type="project" value="UniProtKB-KW"/>
</dbReference>
<dbReference type="GO" id="GO:0030259">
    <property type="term" value="P:lipid glycosylation"/>
    <property type="evidence" value="ECO:0007669"/>
    <property type="project" value="UniProtKB-UniRule"/>
</dbReference>
<dbReference type="GO" id="GO:0009252">
    <property type="term" value="P:peptidoglycan biosynthetic process"/>
    <property type="evidence" value="ECO:0007669"/>
    <property type="project" value="UniProtKB-UniRule"/>
</dbReference>
<dbReference type="GO" id="GO:0008360">
    <property type="term" value="P:regulation of cell shape"/>
    <property type="evidence" value="ECO:0007669"/>
    <property type="project" value="UniProtKB-KW"/>
</dbReference>
<dbReference type="CDD" id="cd03785">
    <property type="entry name" value="GT28_MurG"/>
    <property type="match status" value="1"/>
</dbReference>
<dbReference type="Gene3D" id="3.40.50.2000">
    <property type="entry name" value="Glycogen Phosphorylase B"/>
    <property type="match status" value="2"/>
</dbReference>
<dbReference type="HAMAP" id="MF_00033">
    <property type="entry name" value="MurG"/>
    <property type="match status" value="1"/>
</dbReference>
<dbReference type="InterPro" id="IPR006009">
    <property type="entry name" value="GlcNAc_MurG"/>
</dbReference>
<dbReference type="InterPro" id="IPR007235">
    <property type="entry name" value="Glyco_trans_28_C"/>
</dbReference>
<dbReference type="InterPro" id="IPR004276">
    <property type="entry name" value="GlycoTrans_28_N"/>
</dbReference>
<dbReference type="NCBIfam" id="TIGR01133">
    <property type="entry name" value="murG"/>
    <property type="match status" value="1"/>
</dbReference>
<dbReference type="PANTHER" id="PTHR21015:SF22">
    <property type="entry name" value="GLYCOSYLTRANSFERASE"/>
    <property type="match status" value="1"/>
</dbReference>
<dbReference type="PANTHER" id="PTHR21015">
    <property type="entry name" value="UDP-N-ACETYLGLUCOSAMINE--N-ACETYLMURAMYL-(PENTAPEPTIDE) PYROPHOSPHORYL-UNDECAPRENOL N-ACETYLGLUCOSAMINE TRANSFERASE 1"/>
    <property type="match status" value="1"/>
</dbReference>
<dbReference type="Pfam" id="PF04101">
    <property type="entry name" value="Glyco_tran_28_C"/>
    <property type="match status" value="1"/>
</dbReference>
<dbReference type="Pfam" id="PF03033">
    <property type="entry name" value="Glyco_transf_28"/>
    <property type="match status" value="1"/>
</dbReference>
<dbReference type="SUPFAM" id="SSF53756">
    <property type="entry name" value="UDP-Glycosyltransferase/glycogen phosphorylase"/>
    <property type="match status" value="1"/>
</dbReference>
<name>MURG_ACIBY</name>
<feature type="chain" id="PRO_1000090399" description="UDP-N-acetylglucosamine--N-acetylmuramyl-(pentapeptide) pyrophosphoryl-undecaprenol N-acetylglucosamine transferase">
    <location>
        <begin position="1"/>
        <end position="365"/>
    </location>
</feature>
<feature type="binding site" evidence="1">
    <location>
        <begin position="19"/>
        <end position="21"/>
    </location>
    <ligand>
        <name>UDP-N-acetyl-alpha-D-glucosamine</name>
        <dbReference type="ChEBI" id="CHEBI:57705"/>
    </ligand>
</feature>
<feature type="binding site" evidence="1">
    <location>
        <position position="131"/>
    </location>
    <ligand>
        <name>UDP-N-acetyl-alpha-D-glucosamine</name>
        <dbReference type="ChEBI" id="CHEBI:57705"/>
    </ligand>
</feature>
<feature type="binding site" evidence="1">
    <location>
        <position position="170"/>
    </location>
    <ligand>
        <name>UDP-N-acetyl-alpha-D-glucosamine</name>
        <dbReference type="ChEBI" id="CHEBI:57705"/>
    </ligand>
</feature>
<feature type="binding site" evidence="1">
    <location>
        <position position="201"/>
    </location>
    <ligand>
        <name>UDP-N-acetyl-alpha-D-glucosamine</name>
        <dbReference type="ChEBI" id="CHEBI:57705"/>
    </ligand>
</feature>
<feature type="binding site" evidence="1">
    <location>
        <position position="255"/>
    </location>
    <ligand>
        <name>UDP-N-acetyl-alpha-D-glucosamine</name>
        <dbReference type="ChEBI" id="CHEBI:57705"/>
    </ligand>
</feature>
<feature type="binding site" evidence="1">
    <location>
        <begin position="274"/>
        <end position="279"/>
    </location>
    <ligand>
        <name>UDP-N-acetyl-alpha-D-glucosamine</name>
        <dbReference type="ChEBI" id="CHEBI:57705"/>
    </ligand>
</feature>
<feature type="binding site" evidence="1">
    <location>
        <position position="300"/>
    </location>
    <ligand>
        <name>UDP-N-acetyl-alpha-D-glucosamine</name>
        <dbReference type="ChEBI" id="CHEBI:57705"/>
    </ligand>
</feature>
<proteinExistence type="inferred from homology"/>
<evidence type="ECO:0000255" key="1">
    <source>
        <dbReference type="HAMAP-Rule" id="MF_00033"/>
    </source>
</evidence>